<name>NSA2_PHANO</name>
<proteinExistence type="inferred from homology"/>
<protein>
    <recommendedName>
        <fullName>Ribosome biogenesis protein NSA2</fullName>
    </recommendedName>
</protein>
<comment type="function">
    <text evidence="1">Involved in the biogenesis of the 60S ribosomal subunit. May play a part in the quality control of pre-60S particles (By similarity).</text>
</comment>
<comment type="subunit">
    <text evidence="2">Component of the pre-66S ribosomal particle. Interacts with NOP7 and RRP1. Interacts with RSA4 (via WD repeats).</text>
</comment>
<comment type="subcellular location">
    <subcellularLocation>
        <location evidence="1">Nucleus</location>
        <location evidence="1">Nucleolus</location>
    </subcellularLocation>
</comment>
<comment type="similarity">
    <text evidence="5">Belongs to the eukaryotic ribosomal protein eS8 family. Ribosome biogenesis protein NSA2 subfamily.</text>
</comment>
<accession>Q0UV95</accession>
<feature type="chain" id="PRO_0000320422" description="Ribosome biogenesis protein NSA2">
    <location>
        <begin position="1"/>
        <end position="261"/>
    </location>
</feature>
<feature type="region of interest" description="Disordered" evidence="4">
    <location>
        <begin position="1"/>
        <end position="84"/>
    </location>
</feature>
<feature type="short sequence motif" description="Nuclear localization signal" evidence="3">
    <location>
        <begin position="15"/>
        <end position="22"/>
    </location>
</feature>
<feature type="compositionally biased region" description="Basic and acidic residues" evidence="4">
    <location>
        <begin position="1"/>
        <end position="22"/>
    </location>
</feature>
<feature type="compositionally biased region" description="Basic and acidic residues" evidence="4">
    <location>
        <begin position="49"/>
        <end position="74"/>
    </location>
</feature>
<evidence type="ECO:0000250" key="1"/>
<evidence type="ECO:0000250" key="2">
    <source>
        <dbReference type="UniProtKB" id="P40078"/>
    </source>
</evidence>
<evidence type="ECO:0000255" key="3">
    <source>
        <dbReference type="PROSITE-ProRule" id="PRU00768"/>
    </source>
</evidence>
<evidence type="ECO:0000256" key="4">
    <source>
        <dbReference type="SAM" id="MobiDB-lite"/>
    </source>
</evidence>
<evidence type="ECO:0000305" key="5"/>
<dbReference type="EMBL" id="CH445330">
    <property type="protein sequence ID" value="EAT88079.1"/>
    <property type="molecule type" value="Genomic_DNA"/>
</dbReference>
<dbReference type="RefSeq" id="XP_001794737.1">
    <property type="nucleotide sequence ID" value="XM_001794685.1"/>
</dbReference>
<dbReference type="SMR" id="Q0UV95"/>
<dbReference type="FunCoup" id="Q0UV95">
    <property type="interactions" value="1096"/>
</dbReference>
<dbReference type="STRING" id="321614.Q0UV95"/>
<dbReference type="EnsemblFungi" id="SNOT_04319">
    <property type="protein sequence ID" value="SNOT_04319"/>
    <property type="gene ID" value="SNOG_04319"/>
</dbReference>
<dbReference type="GeneID" id="5971605"/>
<dbReference type="KEGG" id="pno:SNOG_04319"/>
<dbReference type="VEuPathDB" id="FungiDB:JI435_043190"/>
<dbReference type="eggNOG" id="KOG3163">
    <property type="taxonomic scope" value="Eukaryota"/>
</dbReference>
<dbReference type="HOGENOM" id="CLU_1070048_0_0_1"/>
<dbReference type="InParanoid" id="Q0UV95"/>
<dbReference type="OMA" id="TNTPEND"/>
<dbReference type="OrthoDB" id="1847590at2759"/>
<dbReference type="Proteomes" id="UP000001055">
    <property type="component" value="Unassembled WGS sequence"/>
</dbReference>
<dbReference type="GO" id="GO:0005730">
    <property type="term" value="C:nucleolus"/>
    <property type="evidence" value="ECO:0007669"/>
    <property type="project" value="UniProtKB-SubCell"/>
</dbReference>
<dbReference type="GO" id="GO:0030687">
    <property type="term" value="C:preribosome, large subunit precursor"/>
    <property type="evidence" value="ECO:0000318"/>
    <property type="project" value="GO_Central"/>
</dbReference>
<dbReference type="GO" id="GO:0000460">
    <property type="term" value="P:maturation of 5.8S rRNA"/>
    <property type="evidence" value="ECO:0000318"/>
    <property type="project" value="GO_Central"/>
</dbReference>
<dbReference type="GO" id="GO:0000466">
    <property type="term" value="P:maturation of 5.8S rRNA from tricistronic rRNA transcript (SSU-rRNA, 5.8S rRNA, LSU-rRNA)"/>
    <property type="evidence" value="ECO:0007669"/>
    <property type="project" value="EnsemblFungi"/>
</dbReference>
<dbReference type="GO" id="GO:0000470">
    <property type="term" value="P:maturation of LSU-rRNA"/>
    <property type="evidence" value="ECO:0000318"/>
    <property type="project" value="GO_Central"/>
</dbReference>
<dbReference type="GO" id="GO:0000463">
    <property type="term" value="P:maturation of LSU-rRNA from tricistronic rRNA transcript (SSU-rRNA, 5.8S rRNA, LSU-rRNA)"/>
    <property type="evidence" value="ECO:0007669"/>
    <property type="project" value="EnsemblFungi"/>
</dbReference>
<dbReference type="CDD" id="cd11381">
    <property type="entry name" value="NSA2"/>
    <property type="match status" value="1"/>
</dbReference>
<dbReference type="FunFam" id="2.40.10.310:FF:000001">
    <property type="entry name" value="NSA2, ribosome biogenesis homolog"/>
    <property type="match status" value="1"/>
</dbReference>
<dbReference type="Gene3D" id="2.40.10.310">
    <property type="match status" value="1"/>
</dbReference>
<dbReference type="InterPro" id="IPR039411">
    <property type="entry name" value="NSA2_fam"/>
</dbReference>
<dbReference type="InterPro" id="IPR022309">
    <property type="entry name" value="Ribosomal_Se8/biogenesis_NSA2"/>
</dbReference>
<dbReference type="PANTHER" id="PTHR12642">
    <property type="entry name" value="RIBOSOME BIOGENESIS PROTEIN NSA2 HOMOLOG"/>
    <property type="match status" value="1"/>
</dbReference>
<dbReference type="Pfam" id="PF01201">
    <property type="entry name" value="Ribosomal_S8e"/>
    <property type="match status" value="1"/>
</dbReference>
<organism>
    <name type="scientific">Phaeosphaeria nodorum (strain SN15 / ATCC MYA-4574 / FGSC 10173)</name>
    <name type="common">Glume blotch fungus</name>
    <name type="synonym">Parastagonospora nodorum</name>
    <dbReference type="NCBI Taxonomy" id="321614"/>
    <lineage>
        <taxon>Eukaryota</taxon>
        <taxon>Fungi</taxon>
        <taxon>Dikarya</taxon>
        <taxon>Ascomycota</taxon>
        <taxon>Pezizomycotina</taxon>
        <taxon>Dothideomycetes</taxon>
        <taxon>Pleosporomycetidae</taxon>
        <taxon>Pleosporales</taxon>
        <taxon>Pleosporineae</taxon>
        <taxon>Phaeosphaeriaceae</taxon>
        <taxon>Parastagonospora</taxon>
    </lineage>
</organism>
<reference key="1">
    <citation type="journal article" date="2007" name="Plant Cell">
        <title>Dothideomycete-plant interactions illuminated by genome sequencing and EST analysis of the wheat pathogen Stagonospora nodorum.</title>
        <authorList>
            <person name="Hane J.K."/>
            <person name="Lowe R.G.T."/>
            <person name="Solomon P.S."/>
            <person name="Tan K.-C."/>
            <person name="Schoch C.L."/>
            <person name="Spatafora J.W."/>
            <person name="Crous P.W."/>
            <person name="Kodira C.D."/>
            <person name="Birren B.W."/>
            <person name="Galagan J.E."/>
            <person name="Torriani S.F.F."/>
            <person name="McDonald B.A."/>
            <person name="Oliver R.P."/>
        </authorList>
    </citation>
    <scope>NUCLEOTIDE SEQUENCE [LARGE SCALE GENOMIC DNA]</scope>
    <source>
        <strain>SN15 / ATCC MYA-4574 / FGSC 10173</strain>
    </source>
</reference>
<keyword id="KW-0539">Nucleus</keyword>
<keyword id="KW-0687">Ribonucleoprotein</keyword>
<keyword id="KW-0690">Ribosome biogenesis</keyword>
<keyword id="KW-0698">rRNA processing</keyword>
<sequence length="261" mass="29916">MPQNEYIERWQKQHGKRFDHDERKRKRIAREGHDGSKKAQNYRGLRAKLYAEKRRKEKIQMKKTIRAHEERNVKTSEPAEPSTEALPQYLLDRSNEKNAKALSSAIKQKRNEKAARFSVPLPKVKGISEEEMFSVVKTGKKTAKKSWKRMITKPTFVGPGFTRRPVKYERFIRPMGLRYKKANVTHPELSVTVQLPIISVKKNPQNPLYTQLGVLTKGTIIEVNVSELGLVTAGGKVVWGRYAQITNNPENDGCLNAVLLV</sequence>
<gene>
    <name type="primary">NSA2</name>
    <name type="ORF">SNOG_04319</name>
</gene>